<feature type="chain" id="PRO_0000113959" description="Transcription termination/antitermination protein NusG">
    <location>
        <begin position="1"/>
        <end position="179"/>
    </location>
</feature>
<feature type="domain" description="KOW" evidence="1">
    <location>
        <begin position="130"/>
        <end position="157"/>
    </location>
</feature>
<evidence type="ECO:0000255" key="1">
    <source>
        <dbReference type="HAMAP-Rule" id="MF_00948"/>
    </source>
</evidence>
<reference key="1">
    <citation type="journal article" date="2001" name="Proc. Natl. Acad. Sci. U.S.A.">
        <title>Complete genome sequence of an M1 strain of Streptococcus pyogenes.</title>
        <authorList>
            <person name="Ferretti J.J."/>
            <person name="McShan W.M."/>
            <person name="Ajdic D.J."/>
            <person name="Savic D.J."/>
            <person name="Savic G."/>
            <person name="Lyon K."/>
            <person name="Primeaux C."/>
            <person name="Sezate S."/>
            <person name="Suvorov A.N."/>
            <person name="Kenton S."/>
            <person name="Lai H.S."/>
            <person name="Lin S.P."/>
            <person name="Qian Y."/>
            <person name="Jia H.G."/>
            <person name="Najar F.Z."/>
            <person name="Ren Q."/>
            <person name="Zhu H."/>
            <person name="Song L."/>
            <person name="White J."/>
            <person name="Yuan X."/>
            <person name="Clifton S.W."/>
            <person name="Roe B.A."/>
            <person name="McLaughlin R.E."/>
        </authorList>
    </citation>
    <scope>NUCLEOTIDE SEQUENCE [LARGE SCALE GENOMIC DNA]</scope>
    <source>
        <strain>ATCC 700294 / SF370 / Serotype M1</strain>
    </source>
</reference>
<reference key="2">
    <citation type="journal article" date="2005" name="J. Infect. Dis.">
        <title>Evolutionary origin and emergence of a highly successful clone of serotype M1 group A Streptococcus involved multiple horizontal gene transfer events.</title>
        <authorList>
            <person name="Sumby P."/>
            <person name="Porcella S.F."/>
            <person name="Madrigal A.G."/>
            <person name="Barbian K.D."/>
            <person name="Virtaneva K."/>
            <person name="Ricklefs S.M."/>
            <person name="Sturdevant D.E."/>
            <person name="Graham M.R."/>
            <person name="Vuopio-Varkila J."/>
            <person name="Hoe N.P."/>
            <person name="Musser J.M."/>
        </authorList>
    </citation>
    <scope>NUCLEOTIDE SEQUENCE [LARGE SCALE GENOMIC DNA]</scope>
    <source>
        <strain>ATCC BAA-947 / MGAS5005 / Serotype M1</strain>
    </source>
</reference>
<keyword id="KW-1185">Reference proteome</keyword>
<keyword id="KW-0804">Transcription</keyword>
<keyword id="KW-0889">Transcription antitermination</keyword>
<keyword id="KW-0805">Transcription regulation</keyword>
<keyword id="KW-0806">Transcription termination</keyword>
<protein>
    <recommendedName>
        <fullName evidence="1">Transcription termination/antitermination protein NusG</fullName>
    </recommendedName>
</protein>
<proteinExistence type="inferred from homology"/>
<comment type="function">
    <text evidence="1">Participates in transcription elongation, termination and antitermination.</text>
</comment>
<comment type="similarity">
    <text evidence="1">Belongs to the NusG family.</text>
</comment>
<sequence length="179" mass="20385">MLDSFDKGWFVLQTYSGYENKVKENLLQRAQTYNMLDNILRVEIPTQTVNVEKNGQTKEIEENRFPGYVLVEMVMTDEAWFVVRNTPNVTGFVGSHGNRSKPTPLLEEEIRAILLSMGQTIDVFDTNIKEGDVVQIIDGAFMGQEGRVVEIENNKVKLMLNMFGSETVAEVELYQIAEL</sequence>
<name>NUSG_STRP1</name>
<dbReference type="EMBL" id="AE004092">
    <property type="protein sequence ID" value="AAK33264.1"/>
    <property type="molecule type" value="Genomic_DNA"/>
</dbReference>
<dbReference type="EMBL" id="CP000017">
    <property type="protein sequence ID" value="AAZ50757.1"/>
    <property type="molecule type" value="Genomic_DNA"/>
</dbReference>
<dbReference type="RefSeq" id="NP_268543.1">
    <property type="nucleotide sequence ID" value="NC_002737.2"/>
</dbReference>
<dbReference type="SMR" id="P68893"/>
<dbReference type="PaxDb" id="1314-HKU360_00184"/>
<dbReference type="KEGG" id="spy:SPy_0164"/>
<dbReference type="KEGG" id="spz:M5005_Spy0138"/>
<dbReference type="PATRIC" id="fig|160490.10.peg.142"/>
<dbReference type="HOGENOM" id="CLU_067287_1_1_9"/>
<dbReference type="OMA" id="EWYVIHT"/>
<dbReference type="Proteomes" id="UP000000750">
    <property type="component" value="Chromosome"/>
</dbReference>
<dbReference type="GO" id="GO:0005829">
    <property type="term" value="C:cytosol"/>
    <property type="evidence" value="ECO:0007669"/>
    <property type="project" value="TreeGrafter"/>
</dbReference>
<dbReference type="GO" id="GO:0006353">
    <property type="term" value="P:DNA-templated transcription termination"/>
    <property type="evidence" value="ECO:0007669"/>
    <property type="project" value="UniProtKB-UniRule"/>
</dbReference>
<dbReference type="GO" id="GO:0032784">
    <property type="term" value="P:regulation of DNA-templated transcription elongation"/>
    <property type="evidence" value="ECO:0007669"/>
    <property type="project" value="InterPro"/>
</dbReference>
<dbReference type="GO" id="GO:0031564">
    <property type="term" value="P:transcription antitermination"/>
    <property type="evidence" value="ECO:0007669"/>
    <property type="project" value="UniProtKB-UniRule"/>
</dbReference>
<dbReference type="GO" id="GO:0140673">
    <property type="term" value="P:transcription elongation-coupled chromatin remodeling"/>
    <property type="evidence" value="ECO:0007669"/>
    <property type="project" value="InterPro"/>
</dbReference>
<dbReference type="CDD" id="cd06091">
    <property type="entry name" value="KOW_NusG"/>
    <property type="match status" value="1"/>
</dbReference>
<dbReference type="CDD" id="cd09891">
    <property type="entry name" value="NGN_Bact_1"/>
    <property type="match status" value="1"/>
</dbReference>
<dbReference type="FunFam" id="3.30.70.940:FF:000002">
    <property type="entry name" value="Transcription termination/antitermination protein NusG"/>
    <property type="match status" value="1"/>
</dbReference>
<dbReference type="Gene3D" id="2.30.30.30">
    <property type="match status" value="1"/>
</dbReference>
<dbReference type="Gene3D" id="3.30.70.940">
    <property type="entry name" value="NusG, N-terminal domain"/>
    <property type="match status" value="1"/>
</dbReference>
<dbReference type="HAMAP" id="MF_00948">
    <property type="entry name" value="NusG"/>
    <property type="match status" value="1"/>
</dbReference>
<dbReference type="InterPro" id="IPR005824">
    <property type="entry name" value="KOW"/>
</dbReference>
<dbReference type="InterPro" id="IPR047050">
    <property type="entry name" value="NGN"/>
</dbReference>
<dbReference type="InterPro" id="IPR006645">
    <property type="entry name" value="NGN-like_dom"/>
</dbReference>
<dbReference type="InterPro" id="IPR036735">
    <property type="entry name" value="NGN_dom_sf"/>
</dbReference>
<dbReference type="InterPro" id="IPR043425">
    <property type="entry name" value="NusG-like"/>
</dbReference>
<dbReference type="InterPro" id="IPR014722">
    <property type="entry name" value="Rib_uL2_dom2"/>
</dbReference>
<dbReference type="InterPro" id="IPR001062">
    <property type="entry name" value="Transcrpt_antiterm_NusG"/>
</dbReference>
<dbReference type="InterPro" id="IPR008991">
    <property type="entry name" value="Translation_prot_SH3-like_sf"/>
</dbReference>
<dbReference type="NCBIfam" id="TIGR00922">
    <property type="entry name" value="nusG"/>
    <property type="match status" value="1"/>
</dbReference>
<dbReference type="PANTHER" id="PTHR30265">
    <property type="entry name" value="RHO-INTERACTING TRANSCRIPTION TERMINATION FACTOR NUSG"/>
    <property type="match status" value="1"/>
</dbReference>
<dbReference type="PANTHER" id="PTHR30265:SF2">
    <property type="entry name" value="TRANSCRIPTION TERMINATION_ANTITERMINATION PROTEIN NUSG"/>
    <property type="match status" value="1"/>
</dbReference>
<dbReference type="Pfam" id="PF00467">
    <property type="entry name" value="KOW"/>
    <property type="match status" value="1"/>
</dbReference>
<dbReference type="Pfam" id="PF02357">
    <property type="entry name" value="NusG"/>
    <property type="match status" value="1"/>
</dbReference>
<dbReference type="PRINTS" id="PR00338">
    <property type="entry name" value="NUSGTNSCPFCT"/>
</dbReference>
<dbReference type="SMART" id="SM00739">
    <property type="entry name" value="KOW"/>
    <property type="match status" value="1"/>
</dbReference>
<dbReference type="SMART" id="SM00738">
    <property type="entry name" value="NGN"/>
    <property type="match status" value="1"/>
</dbReference>
<dbReference type="SUPFAM" id="SSF82679">
    <property type="entry name" value="N-utilization substance G protein NusG, N-terminal domain"/>
    <property type="match status" value="1"/>
</dbReference>
<dbReference type="SUPFAM" id="SSF50104">
    <property type="entry name" value="Translation proteins SH3-like domain"/>
    <property type="match status" value="1"/>
</dbReference>
<gene>
    <name evidence="1" type="primary">nusG</name>
    <name type="ordered locus">SPy_0164</name>
    <name type="ordered locus">M5005_Spy0138</name>
</gene>
<organism>
    <name type="scientific">Streptococcus pyogenes serotype M1</name>
    <dbReference type="NCBI Taxonomy" id="301447"/>
    <lineage>
        <taxon>Bacteria</taxon>
        <taxon>Bacillati</taxon>
        <taxon>Bacillota</taxon>
        <taxon>Bacilli</taxon>
        <taxon>Lactobacillales</taxon>
        <taxon>Streptococcaceae</taxon>
        <taxon>Streptococcus</taxon>
    </lineage>
</organism>
<accession>P68893</accession>
<accession>P82547</accession>
<accession>Q491G1</accession>